<name>RM04_DANRE</name>
<reference key="1">
    <citation type="submission" date="2005-05" db="EMBL/GenBank/DDBJ databases">
        <authorList>
            <consortium name="NIH - Zebrafish Gene Collection (ZGC) project"/>
        </authorList>
    </citation>
    <scope>NUCLEOTIDE SEQUENCE [LARGE SCALE MRNA]</scope>
    <source>
        <tissue>Eye</tissue>
    </source>
</reference>
<evidence type="ECO:0000250" key="1">
    <source>
        <dbReference type="UniProtKB" id="Q9BYD3"/>
    </source>
</evidence>
<evidence type="ECO:0000305" key="2"/>
<organism>
    <name type="scientific">Danio rerio</name>
    <name type="common">Zebrafish</name>
    <name type="synonym">Brachydanio rerio</name>
    <dbReference type="NCBI Taxonomy" id="7955"/>
    <lineage>
        <taxon>Eukaryota</taxon>
        <taxon>Metazoa</taxon>
        <taxon>Chordata</taxon>
        <taxon>Craniata</taxon>
        <taxon>Vertebrata</taxon>
        <taxon>Euteleostomi</taxon>
        <taxon>Actinopterygii</taxon>
        <taxon>Neopterygii</taxon>
        <taxon>Teleostei</taxon>
        <taxon>Ostariophysi</taxon>
        <taxon>Cypriniformes</taxon>
        <taxon>Danionidae</taxon>
        <taxon>Danioninae</taxon>
        <taxon>Danio</taxon>
    </lineage>
</organism>
<comment type="subunit">
    <text evidence="1">Component of the mitochondrial ribosome large subunit (39S) which comprises a 16S rRNA and about 50 distinct proteins.</text>
</comment>
<comment type="subcellular location">
    <subcellularLocation>
        <location evidence="1">Mitochondrion</location>
    </subcellularLocation>
</comment>
<comment type="similarity">
    <text evidence="2">Belongs to the universal ribosomal protein uL4 family.</text>
</comment>
<keyword id="KW-0496">Mitochondrion</keyword>
<keyword id="KW-1185">Reference proteome</keyword>
<keyword id="KW-0687">Ribonucleoprotein</keyword>
<keyword id="KW-0689">Ribosomal protein</keyword>
<sequence>MFRATLAICGRTVVKRQFISSVSGESALPPNLRLPPNLIGVAAEKRPPPSGSDLPVVRRCEADVPAHLTPAQTWLESLGSRDSDQLGVVDLHPDVFSVPIRLDILHAVEVWQRNFKRISYANVKTRAEVRGGGRKPWQQKRTGRARHGSIRSPLWRGGGIIHGPRGPTSYYYMLPMKVRVQGLKIALSAKLAQDYLHIVDSLEIPTPDPQYLQDLVKHRQWGDSVLIVDVGEEFPQNILKATEDLKTVNIIPALGLNVHSLLKHESLVLTLEAVKFLEKKLLWHDVRYTPLYPFKLPYSDLP</sequence>
<protein>
    <recommendedName>
        <fullName evidence="2">Large ribosomal subunit protein uL4m</fullName>
    </recommendedName>
    <alternativeName>
        <fullName>39S ribosomal protein L4, mitochondrial</fullName>
        <shortName>L4mt</shortName>
        <shortName>MRP-L4</shortName>
    </alternativeName>
</protein>
<feature type="chain" id="PRO_0000238951" description="Large ribosomal subunit protein uL4m">
    <location>
        <begin position="1"/>
        <end position="302"/>
    </location>
</feature>
<gene>
    <name type="primary">mrpl4</name>
    <name type="ORF">zgc:110034</name>
</gene>
<dbReference type="EMBL" id="BC095145">
    <property type="protein sequence ID" value="AAH95145.1"/>
    <property type="molecule type" value="mRNA"/>
</dbReference>
<dbReference type="RefSeq" id="NP_001018572.1">
    <property type="nucleotide sequence ID" value="NM_001020736.1"/>
</dbReference>
<dbReference type="SMR" id="Q503X2"/>
<dbReference type="FunCoup" id="Q503X2">
    <property type="interactions" value="1019"/>
</dbReference>
<dbReference type="STRING" id="7955.ENSDARP00000076204"/>
<dbReference type="PaxDb" id="7955-ENSDARP00000076204"/>
<dbReference type="Ensembl" id="ENSDART00000081765">
    <property type="protein sequence ID" value="ENSDARP00000076204"/>
    <property type="gene ID" value="ENSDARG00000058824"/>
</dbReference>
<dbReference type="GeneID" id="553771"/>
<dbReference type="KEGG" id="dre:553771"/>
<dbReference type="AGR" id="ZFIN:ZDB-GENE-050522-388"/>
<dbReference type="CTD" id="51073"/>
<dbReference type="ZFIN" id="ZDB-GENE-050522-388">
    <property type="gene designation" value="mrpl4"/>
</dbReference>
<dbReference type="eggNOG" id="KOG1624">
    <property type="taxonomic scope" value="Eukaryota"/>
</dbReference>
<dbReference type="HOGENOM" id="CLU_041575_3_3_1"/>
<dbReference type="InParanoid" id="Q503X2"/>
<dbReference type="OMA" id="WIENTDA"/>
<dbReference type="OrthoDB" id="275876at2759"/>
<dbReference type="PhylomeDB" id="Q503X2"/>
<dbReference type="TreeFam" id="TF313913"/>
<dbReference type="Reactome" id="R-DRE-5389840">
    <property type="pathway name" value="Mitochondrial translation elongation"/>
</dbReference>
<dbReference type="Reactome" id="R-DRE-5419276">
    <property type="pathway name" value="Mitochondrial translation termination"/>
</dbReference>
<dbReference type="PRO" id="PR:Q503X2"/>
<dbReference type="Proteomes" id="UP000000437">
    <property type="component" value="Chromosome 11"/>
</dbReference>
<dbReference type="Bgee" id="ENSDARG00000058824">
    <property type="expression patterns" value="Expressed in cardiac ventricle and 26 other cell types or tissues"/>
</dbReference>
<dbReference type="ExpressionAtlas" id="Q503X2">
    <property type="expression patterns" value="baseline and differential"/>
</dbReference>
<dbReference type="GO" id="GO:0005762">
    <property type="term" value="C:mitochondrial large ribosomal subunit"/>
    <property type="evidence" value="ECO:0000250"/>
    <property type="project" value="UniProtKB"/>
</dbReference>
<dbReference type="GO" id="GO:0003735">
    <property type="term" value="F:structural constituent of ribosome"/>
    <property type="evidence" value="ECO:0000318"/>
    <property type="project" value="GO_Central"/>
</dbReference>
<dbReference type="GO" id="GO:0006412">
    <property type="term" value="P:translation"/>
    <property type="evidence" value="ECO:0007669"/>
    <property type="project" value="InterPro"/>
</dbReference>
<dbReference type="FunFam" id="3.40.1370.10:FF:000005">
    <property type="entry name" value="39S ribosomal protein L4, mitochondrial"/>
    <property type="match status" value="1"/>
</dbReference>
<dbReference type="Gene3D" id="3.40.1370.10">
    <property type="match status" value="1"/>
</dbReference>
<dbReference type="HAMAP" id="MF_01328_B">
    <property type="entry name" value="Ribosomal_uL4_B"/>
    <property type="match status" value="1"/>
</dbReference>
<dbReference type="InterPro" id="IPR002136">
    <property type="entry name" value="Ribosomal_uL4"/>
</dbReference>
<dbReference type="InterPro" id="IPR013005">
    <property type="entry name" value="Ribosomal_uL4-like"/>
</dbReference>
<dbReference type="InterPro" id="IPR023574">
    <property type="entry name" value="Ribosomal_uL4_dom_sf"/>
</dbReference>
<dbReference type="NCBIfam" id="TIGR03953">
    <property type="entry name" value="rplD_bact"/>
    <property type="match status" value="1"/>
</dbReference>
<dbReference type="PANTHER" id="PTHR10746">
    <property type="entry name" value="50S RIBOSOMAL PROTEIN L4"/>
    <property type="match status" value="1"/>
</dbReference>
<dbReference type="PANTHER" id="PTHR10746:SF6">
    <property type="entry name" value="LARGE RIBOSOMAL SUBUNIT PROTEIN UL4M"/>
    <property type="match status" value="1"/>
</dbReference>
<dbReference type="Pfam" id="PF00573">
    <property type="entry name" value="Ribosomal_L4"/>
    <property type="match status" value="1"/>
</dbReference>
<dbReference type="SUPFAM" id="SSF52166">
    <property type="entry name" value="Ribosomal protein L4"/>
    <property type="match status" value="1"/>
</dbReference>
<accession>Q503X2</accession>
<proteinExistence type="evidence at transcript level"/>